<keyword id="KW-0125">Carotenoid biosynthesis</keyword>
<keyword id="KW-1003">Cell membrane</keyword>
<keyword id="KW-0328">Glycosyltransferase</keyword>
<keyword id="KW-0472">Membrane</keyword>
<keyword id="KW-0808">Transferase</keyword>
<keyword id="KW-0812">Transmembrane</keyword>
<keyword id="KW-1133">Transmembrane helix</keyword>
<organism>
    <name type="scientific">Staphylococcus aureus (strain MSSA476)</name>
    <dbReference type="NCBI Taxonomy" id="282459"/>
    <lineage>
        <taxon>Bacteria</taxon>
        <taxon>Bacillati</taxon>
        <taxon>Bacillota</taxon>
        <taxon>Bacilli</taxon>
        <taxon>Bacillales</taxon>
        <taxon>Staphylococcaceae</taxon>
        <taxon>Staphylococcus</taxon>
    </lineage>
</organism>
<proteinExistence type="inferred from homology"/>
<accession>Q6G6B1</accession>
<name>CRTQ_STAAS</name>
<comment type="function">
    <text evidence="1">Catalyzes the glycosylation of 4,4'-diaponeurosporenoate, i.e. the esterification of glucose at the C1'' position with the carboxyl group of 4,4'-diaponeurosporenic acid, to form glycosyl-4,4'-diaponeurosporenoate. This is a step in the biosynthesis of staphyloxanthin, an orange pigment present in most staphylococci strains (By similarity).</text>
</comment>
<comment type="pathway">
    <text>Carotenoid biosynthesis; staphyloxanthin biosynthesis; staphyloxanthin from farnesyl diphosphate: step 4/5.</text>
</comment>
<comment type="subcellular location">
    <subcellularLocation>
        <location evidence="3">Cell membrane</location>
        <topology evidence="3">Multi-pass membrane protein</topology>
    </subcellularLocation>
</comment>
<comment type="similarity">
    <text evidence="3">Belongs to the glycosyltransferase 2 family. CrtQ subfamily.</text>
</comment>
<dbReference type="EC" id="2.4.1.-"/>
<dbReference type="EMBL" id="BX571857">
    <property type="protein sequence ID" value="CAG44265.1"/>
    <property type="molecule type" value="Genomic_DNA"/>
</dbReference>
<dbReference type="RefSeq" id="WP_000871731.1">
    <property type="nucleotide sequence ID" value="NC_002953.3"/>
</dbReference>
<dbReference type="SMR" id="Q6G6B1"/>
<dbReference type="CAZy" id="GT2">
    <property type="family name" value="Glycosyltransferase Family 2"/>
</dbReference>
<dbReference type="KEGG" id="sas:SAS2449"/>
<dbReference type="HOGENOM" id="CLU_038143_1_0_9"/>
<dbReference type="UniPathway" id="UPA00029">
    <property type="reaction ID" value="UER00559"/>
</dbReference>
<dbReference type="GO" id="GO:0005886">
    <property type="term" value="C:plasma membrane"/>
    <property type="evidence" value="ECO:0007669"/>
    <property type="project" value="UniProtKB-SubCell"/>
</dbReference>
<dbReference type="GO" id="GO:0016757">
    <property type="term" value="F:glycosyltransferase activity"/>
    <property type="evidence" value="ECO:0007669"/>
    <property type="project" value="UniProtKB-KW"/>
</dbReference>
<dbReference type="GO" id="GO:0016117">
    <property type="term" value="P:carotenoid biosynthetic process"/>
    <property type="evidence" value="ECO:0007669"/>
    <property type="project" value="UniProtKB-KW"/>
</dbReference>
<dbReference type="CDD" id="cd00761">
    <property type="entry name" value="Glyco_tranf_GTA_type"/>
    <property type="match status" value="1"/>
</dbReference>
<dbReference type="FunFam" id="3.90.550.10:FF:000172">
    <property type="entry name" value="Hpnb"/>
    <property type="match status" value="1"/>
</dbReference>
<dbReference type="Gene3D" id="3.90.550.10">
    <property type="entry name" value="Spore Coat Polysaccharide Biosynthesis Protein SpsA, Chain A"/>
    <property type="match status" value="1"/>
</dbReference>
<dbReference type="InterPro" id="IPR001173">
    <property type="entry name" value="Glyco_trans_2-like"/>
</dbReference>
<dbReference type="InterPro" id="IPR029044">
    <property type="entry name" value="Nucleotide-diphossugar_trans"/>
</dbReference>
<dbReference type="PANTHER" id="PTHR43646">
    <property type="entry name" value="GLYCOSYLTRANSFERASE"/>
    <property type="match status" value="1"/>
</dbReference>
<dbReference type="PANTHER" id="PTHR43646:SF2">
    <property type="entry name" value="GLYCOSYLTRANSFERASE 2-LIKE DOMAIN-CONTAINING PROTEIN"/>
    <property type="match status" value="1"/>
</dbReference>
<dbReference type="Pfam" id="PF00535">
    <property type="entry name" value="Glycos_transf_2"/>
    <property type="match status" value="1"/>
</dbReference>
<dbReference type="SUPFAM" id="SSF53448">
    <property type="entry name" value="Nucleotide-diphospho-sugar transferases"/>
    <property type="match status" value="1"/>
</dbReference>
<reference key="1">
    <citation type="journal article" date="2004" name="Proc. Natl. Acad. Sci. U.S.A.">
        <title>Complete genomes of two clinical Staphylococcus aureus strains: evidence for the rapid evolution of virulence and drug resistance.</title>
        <authorList>
            <person name="Holden M.T.G."/>
            <person name="Feil E.J."/>
            <person name="Lindsay J.A."/>
            <person name="Peacock S.J."/>
            <person name="Day N.P.J."/>
            <person name="Enright M.C."/>
            <person name="Foster T.J."/>
            <person name="Moore C.E."/>
            <person name="Hurst L."/>
            <person name="Atkin R."/>
            <person name="Barron A."/>
            <person name="Bason N."/>
            <person name="Bentley S.D."/>
            <person name="Chillingworth C."/>
            <person name="Chillingworth T."/>
            <person name="Churcher C."/>
            <person name="Clark L."/>
            <person name="Corton C."/>
            <person name="Cronin A."/>
            <person name="Doggett J."/>
            <person name="Dowd L."/>
            <person name="Feltwell T."/>
            <person name="Hance Z."/>
            <person name="Harris B."/>
            <person name="Hauser H."/>
            <person name="Holroyd S."/>
            <person name="Jagels K."/>
            <person name="James K.D."/>
            <person name="Lennard N."/>
            <person name="Line A."/>
            <person name="Mayes R."/>
            <person name="Moule S."/>
            <person name="Mungall K."/>
            <person name="Ormond D."/>
            <person name="Quail M.A."/>
            <person name="Rabbinowitsch E."/>
            <person name="Rutherford K.M."/>
            <person name="Sanders M."/>
            <person name="Sharp S."/>
            <person name="Simmonds M."/>
            <person name="Stevens K."/>
            <person name="Whitehead S."/>
            <person name="Barrell B.G."/>
            <person name="Spratt B.G."/>
            <person name="Parkhill J."/>
        </authorList>
    </citation>
    <scope>NUCLEOTIDE SEQUENCE [LARGE SCALE GENOMIC DNA]</scope>
    <source>
        <strain>MSSA476</strain>
    </source>
</reference>
<evidence type="ECO:0000250" key="1"/>
<evidence type="ECO:0000255" key="2"/>
<evidence type="ECO:0000305" key="3"/>
<sequence>MKWLSRILTVIVTMSMACGALIFNRRHQLKAKTLNFNHKALTIIIPARNEEKRIGHLLHSIIQQQVPVDVIVMNDGSTDETARVARSYGATVVDVVDDTDGKWYGKSHACYQGVTHACTNRIAFVDADVTFLRKDAVETLINQYQLQGEKGLLSVQPYHITKRFYEGFSAIFNLMTVVGMNVFSTLDDGRTNQHAFGPVTLTNKEDYYATGGHKSANRHIIEGFALGSAYTSQSLPVTVYEGFPFVAFRMYQEGFQSLQEGWTKHLSTGAGGTKPKIMTAIVLWLFGSIASILGLCLSLKYRQMSVRKMVALYLSYTTQFIYLHRRVGQFSNLLMVCHPLLFMFFTKIFIQSWKQTHRYGVVEWKGRQYSISKEQ</sequence>
<feature type="chain" id="PRO_0000284861" description="4,4'-diaponeurosporenoate glycosyltransferase">
    <location>
        <begin position="1"/>
        <end position="375"/>
    </location>
</feature>
<feature type="transmembrane region" description="Helical" evidence="2">
    <location>
        <begin position="3"/>
        <end position="23"/>
    </location>
</feature>
<feature type="transmembrane region" description="Helical" evidence="2">
    <location>
        <begin position="164"/>
        <end position="184"/>
    </location>
</feature>
<feature type="transmembrane region" description="Helical" evidence="2">
    <location>
        <begin position="277"/>
        <end position="297"/>
    </location>
</feature>
<feature type="transmembrane region" description="Helical" evidence="2">
    <location>
        <begin position="330"/>
        <end position="350"/>
    </location>
</feature>
<gene>
    <name type="primary">crtQ</name>
    <name type="ordered locus">SAS2449</name>
</gene>
<protein>
    <recommendedName>
        <fullName>4,4'-diaponeurosporenoate glycosyltransferase</fullName>
        <ecNumber>2.4.1.-</ecNumber>
    </recommendedName>
</protein>